<sequence length="314" mass="34406">MKRAPTKQPAKPAARGGERAQGRVIAAHGRHYIVAPADGGPMLQCFPRRKKSEVAVGDRVAYERTSADQGVIVEIGERRNLLYRSDQFKSKLFAANLDQLLIVLATEPYFSEDLLGRALIAAEANELKPIVVLNKIDVEAALPVARERLAPYRALGYDVLELSVKSAPDDARTQLAPRLAGHSTILLGQSGMGKSTLVNLLVPNAEAATREISAALNSGRHTTTFTRLYPLQDGGALIDSPGFQEFGLYHLTEGRLERAFPEFRPLLAHCRFYNCHHLHEPGCAILEALADGRIAPTRHALYAQLVHEASQIVR</sequence>
<accession>Q62M59</accession>
<protein>
    <recommendedName>
        <fullName evidence="1">Small ribosomal subunit biogenesis GTPase RsgA</fullName>
        <ecNumber evidence="1">3.6.1.-</ecNumber>
    </recommendedName>
</protein>
<dbReference type="EC" id="3.6.1.-" evidence="1"/>
<dbReference type="EMBL" id="CP000010">
    <property type="protein sequence ID" value="AAU48771.1"/>
    <property type="molecule type" value="Genomic_DNA"/>
</dbReference>
<dbReference type="RefSeq" id="WP_004189924.1">
    <property type="nucleotide sequence ID" value="NC_006348.1"/>
</dbReference>
<dbReference type="RefSeq" id="YP_102209.1">
    <property type="nucleotide sequence ID" value="NC_006348.1"/>
</dbReference>
<dbReference type="SMR" id="Q62M59"/>
<dbReference type="GeneID" id="92978166"/>
<dbReference type="KEGG" id="bma:BMA0394"/>
<dbReference type="PATRIC" id="fig|243160.12.peg.400"/>
<dbReference type="eggNOG" id="COG1162">
    <property type="taxonomic scope" value="Bacteria"/>
</dbReference>
<dbReference type="HOGENOM" id="CLU_033617_2_0_4"/>
<dbReference type="Proteomes" id="UP000006693">
    <property type="component" value="Chromosome 1"/>
</dbReference>
<dbReference type="GO" id="GO:0005737">
    <property type="term" value="C:cytoplasm"/>
    <property type="evidence" value="ECO:0007669"/>
    <property type="project" value="UniProtKB-SubCell"/>
</dbReference>
<dbReference type="GO" id="GO:0005525">
    <property type="term" value="F:GTP binding"/>
    <property type="evidence" value="ECO:0007669"/>
    <property type="project" value="UniProtKB-UniRule"/>
</dbReference>
<dbReference type="GO" id="GO:0003924">
    <property type="term" value="F:GTPase activity"/>
    <property type="evidence" value="ECO:0007669"/>
    <property type="project" value="UniProtKB-UniRule"/>
</dbReference>
<dbReference type="GO" id="GO:0046872">
    <property type="term" value="F:metal ion binding"/>
    <property type="evidence" value="ECO:0007669"/>
    <property type="project" value="UniProtKB-KW"/>
</dbReference>
<dbReference type="GO" id="GO:0019843">
    <property type="term" value="F:rRNA binding"/>
    <property type="evidence" value="ECO:0007669"/>
    <property type="project" value="UniProtKB-KW"/>
</dbReference>
<dbReference type="GO" id="GO:0042274">
    <property type="term" value="P:ribosomal small subunit biogenesis"/>
    <property type="evidence" value="ECO:0007669"/>
    <property type="project" value="UniProtKB-UniRule"/>
</dbReference>
<dbReference type="CDD" id="cd04466">
    <property type="entry name" value="S1_YloQ_GTPase"/>
    <property type="match status" value="1"/>
</dbReference>
<dbReference type="CDD" id="cd01854">
    <property type="entry name" value="YjeQ_EngC"/>
    <property type="match status" value="1"/>
</dbReference>
<dbReference type="Gene3D" id="2.40.50.140">
    <property type="entry name" value="Nucleic acid-binding proteins"/>
    <property type="match status" value="1"/>
</dbReference>
<dbReference type="Gene3D" id="3.40.50.300">
    <property type="entry name" value="P-loop containing nucleotide triphosphate hydrolases"/>
    <property type="match status" value="1"/>
</dbReference>
<dbReference type="Gene3D" id="1.10.40.50">
    <property type="entry name" value="Probable gtpase engc, domain 3"/>
    <property type="match status" value="1"/>
</dbReference>
<dbReference type="HAMAP" id="MF_01820">
    <property type="entry name" value="GTPase_RsgA"/>
    <property type="match status" value="1"/>
</dbReference>
<dbReference type="InterPro" id="IPR030378">
    <property type="entry name" value="G_CP_dom"/>
</dbReference>
<dbReference type="InterPro" id="IPR012340">
    <property type="entry name" value="NA-bd_OB-fold"/>
</dbReference>
<dbReference type="InterPro" id="IPR027417">
    <property type="entry name" value="P-loop_NTPase"/>
</dbReference>
<dbReference type="InterPro" id="IPR004881">
    <property type="entry name" value="Ribosome_biogen_GTPase_RsgA"/>
</dbReference>
<dbReference type="InterPro" id="IPR010914">
    <property type="entry name" value="RsgA_GTPase_dom"/>
</dbReference>
<dbReference type="InterPro" id="IPR031944">
    <property type="entry name" value="RsgA_N"/>
</dbReference>
<dbReference type="NCBIfam" id="TIGR00157">
    <property type="entry name" value="ribosome small subunit-dependent GTPase A"/>
    <property type="match status" value="1"/>
</dbReference>
<dbReference type="PANTHER" id="PTHR32120">
    <property type="entry name" value="SMALL RIBOSOMAL SUBUNIT BIOGENESIS GTPASE RSGA"/>
    <property type="match status" value="1"/>
</dbReference>
<dbReference type="PANTHER" id="PTHR32120:SF11">
    <property type="entry name" value="SMALL RIBOSOMAL SUBUNIT BIOGENESIS GTPASE RSGA 1, MITOCHONDRIAL-RELATED"/>
    <property type="match status" value="1"/>
</dbReference>
<dbReference type="Pfam" id="PF03193">
    <property type="entry name" value="RsgA_GTPase"/>
    <property type="match status" value="1"/>
</dbReference>
<dbReference type="SUPFAM" id="SSF50249">
    <property type="entry name" value="Nucleic acid-binding proteins"/>
    <property type="match status" value="1"/>
</dbReference>
<dbReference type="SUPFAM" id="SSF52540">
    <property type="entry name" value="P-loop containing nucleoside triphosphate hydrolases"/>
    <property type="match status" value="1"/>
</dbReference>
<dbReference type="PROSITE" id="PS50936">
    <property type="entry name" value="ENGC_GTPASE"/>
    <property type="match status" value="1"/>
</dbReference>
<dbReference type="PROSITE" id="PS51721">
    <property type="entry name" value="G_CP"/>
    <property type="match status" value="1"/>
</dbReference>
<organism>
    <name type="scientific">Burkholderia mallei (strain ATCC 23344)</name>
    <dbReference type="NCBI Taxonomy" id="243160"/>
    <lineage>
        <taxon>Bacteria</taxon>
        <taxon>Pseudomonadati</taxon>
        <taxon>Pseudomonadota</taxon>
        <taxon>Betaproteobacteria</taxon>
        <taxon>Burkholderiales</taxon>
        <taxon>Burkholderiaceae</taxon>
        <taxon>Burkholderia</taxon>
        <taxon>pseudomallei group</taxon>
    </lineage>
</organism>
<name>RSGA_BURMA</name>
<feature type="chain" id="PRO_1000216029" description="Small ribosomal subunit biogenesis GTPase RsgA">
    <location>
        <begin position="1"/>
        <end position="314"/>
    </location>
</feature>
<feature type="domain" description="CP-type G" evidence="2">
    <location>
        <begin position="85"/>
        <end position="246"/>
    </location>
</feature>
<feature type="region of interest" description="Disordered" evidence="3">
    <location>
        <begin position="1"/>
        <end position="21"/>
    </location>
</feature>
<feature type="binding site" evidence="1">
    <location>
        <begin position="134"/>
        <end position="137"/>
    </location>
    <ligand>
        <name>GTP</name>
        <dbReference type="ChEBI" id="CHEBI:37565"/>
    </ligand>
</feature>
<feature type="binding site" evidence="1">
    <location>
        <begin position="188"/>
        <end position="196"/>
    </location>
    <ligand>
        <name>GTP</name>
        <dbReference type="ChEBI" id="CHEBI:37565"/>
    </ligand>
</feature>
<feature type="binding site" evidence="1">
    <location>
        <position position="270"/>
    </location>
    <ligand>
        <name>Zn(2+)</name>
        <dbReference type="ChEBI" id="CHEBI:29105"/>
    </ligand>
</feature>
<feature type="binding site" evidence="1">
    <location>
        <position position="275"/>
    </location>
    <ligand>
        <name>Zn(2+)</name>
        <dbReference type="ChEBI" id="CHEBI:29105"/>
    </ligand>
</feature>
<feature type="binding site" evidence="1">
    <location>
        <position position="277"/>
    </location>
    <ligand>
        <name>Zn(2+)</name>
        <dbReference type="ChEBI" id="CHEBI:29105"/>
    </ligand>
</feature>
<feature type="binding site" evidence="1">
    <location>
        <position position="283"/>
    </location>
    <ligand>
        <name>Zn(2+)</name>
        <dbReference type="ChEBI" id="CHEBI:29105"/>
    </ligand>
</feature>
<evidence type="ECO:0000255" key="1">
    <source>
        <dbReference type="HAMAP-Rule" id="MF_01820"/>
    </source>
</evidence>
<evidence type="ECO:0000255" key="2">
    <source>
        <dbReference type="PROSITE-ProRule" id="PRU01058"/>
    </source>
</evidence>
<evidence type="ECO:0000256" key="3">
    <source>
        <dbReference type="SAM" id="MobiDB-lite"/>
    </source>
</evidence>
<proteinExistence type="inferred from homology"/>
<comment type="function">
    <text evidence="1">One of several proteins that assist in the late maturation steps of the functional core of the 30S ribosomal subunit. Helps release RbfA from mature subunits. May play a role in the assembly of ribosomal proteins into the subunit. Circularly permuted GTPase that catalyzes slow GTP hydrolysis, GTPase activity is stimulated by the 30S ribosomal subunit.</text>
</comment>
<comment type="cofactor">
    <cofactor evidence="1">
        <name>Zn(2+)</name>
        <dbReference type="ChEBI" id="CHEBI:29105"/>
    </cofactor>
    <text evidence="1">Binds 1 zinc ion per subunit.</text>
</comment>
<comment type="subunit">
    <text evidence="1">Monomer. Associates with 30S ribosomal subunit, binds 16S rRNA.</text>
</comment>
<comment type="subcellular location">
    <subcellularLocation>
        <location evidence="1">Cytoplasm</location>
    </subcellularLocation>
</comment>
<comment type="similarity">
    <text evidence="1">Belongs to the TRAFAC class YlqF/YawG GTPase family. RsgA subfamily.</text>
</comment>
<keyword id="KW-0963">Cytoplasm</keyword>
<keyword id="KW-0342">GTP-binding</keyword>
<keyword id="KW-0378">Hydrolase</keyword>
<keyword id="KW-0479">Metal-binding</keyword>
<keyword id="KW-0547">Nucleotide-binding</keyword>
<keyword id="KW-1185">Reference proteome</keyword>
<keyword id="KW-0690">Ribosome biogenesis</keyword>
<keyword id="KW-0694">RNA-binding</keyword>
<keyword id="KW-0699">rRNA-binding</keyword>
<keyword id="KW-0862">Zinc</keyword>
<gene>
    <name evidence="1" type="primary">rsgA</name>
    <name type="ordered locus">BMA0394</name>
</gene>
<reference key="1">
    <citation type="journal article" date="2004" name="Proc. Natl. Acad. Sci. U.S.A.">
        <title>Structural flexibility in the Burkholderia mallei genome.</title>
        <authorList>
            <person name="Nierman W.C."/>
            <person name="DeShazer D."/>
            <person name="Kim H.S."/>
            <person name="Tettelin H."/>
            <person name="Nelson K.E."/>
            <person name="Feldblyum T.V."/>
            <person name="Ulrich R.L."/>
            <person name="Ronning C.M."/>
            <person name="Brinkac L.M."/>
            <person name="Daugherty S.C."/>
            <person name="Davidsen T.D."/>
            <person name="DeBoy R.T."/>
            <person name="Dimitrov G."/>
            <person name="Dodson R.J."/>
            <person name="Durkin A.S."/>
            <person name="Gwinn M.L."/>
            <person name="Haft D.H."/>
            <person name="Khouri H.M."/>
            <person name="Kolonay J.F."/>
            <person name="Madupu R."/>
            <person name="Mohammoud Y."/>
            <person name="Nelson W.C."/>
            <person name="Radune D."/>
            <person name="Romero C.M."/>
            <person name="Sarria S."/>
            <person name="Selengut J."/>
            <person name="Shamblin C."/>
            <person name="Sullivan S.A."/>
            <person name="White O."/>
            <person name="Yu Y."/>
            <person name="Zafar N."/>
            <person name="Zhou L."/>
            <person name="Fraser C.M."/>
        </authorList>
    </citation>
    <scope>NUCLEOTIDE SEQUENCE [LARGE SCALE GENOMIC DNA]</scope>
    <source>
        <strain>ATCC 23344</strain>
    </source>
</reference>